<proteinExistence type="inferred from homology"/>
<keyword id="KW-0004">4Fe-4S</keyword>
<keyword id="KW-0067">ATP-binding</keyword>
<keyword id="KW-0149">Chlorophyll biosynthesis</keyword>
<keyword id="KW-0150">Chloroplast</keyword>
<keyword id="KW-0408">Iron</keyword>
<keyword id="KW-0411">Iron-sulfur</keyword>
<keyword id="KW-0460">Magnesium</keyword>
<keyword id="KW-0479">Metal-binding</keyword>
<keyword id="KW-0547">Nucleotide-binding</keyword>
<keyword id="KW-0560">Oxidoreductase</keyword>
<keyword id="KW-0602">Photosynthesis</keyword>
<keyword id="KW-0934">Plastid</keyword>
<keyword id="KW-1185">Reference proteome</keyword>
<reference key="1">
    <citation type="journal article" date="2003" name="Nucleic Acids Res.">
        <title>Complete chloroplast DNA sequence of the moss Physcomitrella patens: evidence for the loss and relocation of rpoA from the chloroplast to the nucleus.</title>
        <authorList>
            <person name="Sugiura C."/>
            <person name="Kobayashi Y."/>
            <person name="Setsuyuki A."/>
            <person name="Sugita C."/>
            <person name="Sugita M."/>
        </authorList>
    </citation>
    <scope>NUCLEOTIDE SEQUENCE [LARGE SCALE GENOMIC DNA]</scope>
    <source>
        <strain>cv. Gransden 2004</strain>
    </source>
</reference>
<organism>
    <name type="scientific">Physcomitrium patens</name>
    <name type="common">Spreading-leaved earth moss</name>
    <name type="synonym">Physcomitrella patens</name>
    <dbReference type="NCBI Taxonomy" id="3218"/>
    <lineage>
        <taxon>Eukaryota</taxon>
        <taxon>Viridiplantae</taxon>
        <taxon>Streptophyta</taxon>
        <taxon>Embryophyta</taxon>
        <taxon>Bryophyta</taxon>
        <taxon>Bryophytina</taxon>
        <taxon>Bryopsida</taxon>
        <taxon>Funariidae</taxon>
        <taxon>Funariales</taxon>
        <taxon>Funariaceae</taxon>
        <taxon>Physcomitrium</taxon>
    </lineage>
</organism>
<sequence>MKIAVYGKGGIGKSTTSCNISIALARRGKKVLQIGCDPKHDSTFTLTGFLIPTIIDTLQLKDYHYEDVWPEDVIYKGYGGVDCVEAGGPPAGAGCGGYVVGETVKLLKELNAFYEYDIILFDVLGDVVCGGFAAPLNYADYCIIITDNGFDALFAANRIAASVREKARTHPLRLAGLVGNRTSKRDLIDKYVEACPMPVLEVLPLIEDIRVSRVKGKTLFEMVESQPSLNYVCDFYLNIADQILSQPEGIVPKEVPDRELFSLLSDFYLNPVDKTKDKKENKKEDKENSADFTWL</sequence>
<dbReference type="EC" id="1.3.7.7" evidence="1"/>
<dbReference type="EMBL" id="AP005672">
    <property type="protein sequence ID" value="BAC85098.1"/>
    <property type="molecule type" value="Genomic_DNA"/>
</dbReference>
<dbReference type="RefSeq" id="NP_904248.1">
    <property type="nucleotide sequence ID" value="NC_005087.2"/>
</dbReference>
<dbReference type="RefSeq" id="YP_009477578.1">
    <property type="nucleotide sequence ID" value="NC_037465.1"/>
</dbReference>
<dbReference type="SMR" id="Q6YXQ7"/>
<dbReference type="STRING" id="3218.Q6YXQ7"/>
<dbReference type="GeneID" id="2546807"/>
<dbReference type="GeneID" id="36487223"/>
<dbReference type="KEGG" id="ppp:2546807"/>
<dbReference type="InParanoid" id="Q6YXQ7"/>
<dbReference type="OrthoDB" id="1876302at2759"/>
<dbReference type="UniPathway" id="UPA00670"/>
<dbReference type="Proteomes" id="UP000006727">
    <property type="component" value="Chloroplast"/>
</dbReference>
<dbReference type="GO" id="GO:0009507">
    <property type="term" value="C:chloroplast"/>
    <property type="evidence" value="ECO:0007669"/>
    <property type="project" value="UniProtKB-SubCell"/>
</dbReference>
<dbReference type="GO" id="GO:0051539">
    <property type="term" value="F:4 iron, 4 sulfur cluster binding"/>
    <property type="evidence" value="ECO:0007669"/>
    <property type="project" value="UniProtKB-UniRule"/>
</dbReference>
<dbReference type="GO" id="GO:0005524">
    <property type="term" value="F:ATP binding"/>
    <property type="evidence" value="ECO:0007669"/>
    <property type="project" value="UniProtKB-UniRule"/>
</dbReference>
<dbReference type="GO" id="GO:0046872">
    <property type="term" value="F:metal ion binding"/>
    <property type="evidence" value="ECO:0007669"/>
    <property type="project" value="UniProtKB-KW"/>
</dbReference>
<dbReference type="GO" id="GO:0016730">
    <property type="term" value="F:oxidoreductase activity, acting on iron-sulfur proteins as donors"/>
    <property type="evidence" value="ECO:0007669"/>
    <property type="project" value="InterPro"/>
</dbReference>
<dbReference type="GO" id="GO:0016636">
    <property type="term" value="F:oxidoreductase activity, acting on the CH-CH group of donors, iron-sulfur protein as acceptor"/>
    <property type="evidence" value="ECO:0007669"/>
    <property type="project" value="UniProtKB-UniRule"/>
</dbReference>
<dbReference type="GO" id="GO:0036068">
    <property type="term" value="P:light-independent chlorophyll biosynthetic process"/>
    <property type="evidence" value="ECO:0007669"/>
    <property type="project" value="UniProtKB-UniRule"/>
</dbReference>
<dbReference type="GO" id="GO:0019685">
    <property type="term" value="P:photosynthesis, dark reaction"/>
    <property type="evidence" value="ECO:0007669"/>
    <property type="project" value="InterPro"/>
</dbReference>
<dbReference type="CDD" id="cd02032">
    <property type="entry name" value="Bchl-like"/>
    <property type="match status" value="1"/>
</dbReference>
<dbReference type="Gene3D" id="3.40.50.300">
    <property type="entry name" value="P-loop containing nucleotide triphosphate hydrolases"/>
    <property type="match status" value="1"/>
</dbReference>
<dbReference type="HAMAP" id="MF_00355">
    <property type="entry name" value="ChlL_BchL"/>
    <property type="match status" value="1"/>
</dbReference>
<dbReference type="InterPro" id="IPR030655">
    <property type="entry name" value="NifH/chlL_CS"/>
</dbReference>
<dbReference type="InterPro" id="IPR000392">
    <property type="entry name" value="NifH/frxC"/>
</dbReference>
<dbReference type="InterPro" id="IPR027417">
    <property type="entry name" value="P-loop_NTPase"/>
</dbReference>
<dbReference type="InterPro" id="IPR005971">
    <property type="entry name" value="Protochlorophyllide_ATP-bd"/>
</dbReference>
<dbReference type="NCBIfam" id="TIGR01281">
    <property type="entry name" value="DPOR_bchL"/>
    <property type="match status" value="1"/>
</dbReference>
<dbReference type="PANTHER" id="PTHR42864">
    <property type="entry name" value="LIGHT-INDEPENDENT PROTOCHLOROPHYLLIDE REDUCTASE IRON-SULFUR ATP-BINDING PROTEIN"/>
    <property type="match status" value="1"/>
</dbReference>
<dbReference type="PANTHER" id="PTHR42864:SF2">
    <property type="entry name" value="LIGHT-INDEPENDENT PROTOCHLOROPHYLLIDE REDUCTASE IRON-SULFUR ATP-BINDING PROTEIN"/>
    <property type="match status" value="1"/>
</dbReference>
<dbReference type="Pfam" id="PF00142">
    <property type="entry name" value="Fer4_NifH"/>
    <property type="match status" value="1"/>
</dbReference>
<dbReference type="PIRSF" id="PIRSF000363">
    <property type="entry name" value="Nitrogenase_iron"/>
    <property type="match status" value="1"/>
</dbReference>
<dbReference type="PRINTS" id="PR00091">
    <property type="entry name" value="NITROGNASEII"/>
</dbReference>
<dbReference type="SUPFAM" id="SSF52540">
    <property type="entry name" value="P-loop containing nucleoside triphosphate hydrolases"/>
    <property type="match status" value="1"/>
</dbReference>
<dbReference type="PROSITE" id="PS00746">
    <property type="entry name" value="NIFH_FRXC_1"/>
    <property type="match status" value="1"/>
</dbReference>
<dbReference type="PROSITE" id="PS00692">
    <property type="entry name" value="NIFH_FRXC_2"/>
    <property type="match status" value="1"/>
</dbReference>
<dbReference type="PROSITE" id="PS51026">
    <property type="entry name" value="NIFH_FRXC_3"/>
    <property type="match status" value="1"/>
</dbReference>
<feature type="chain" id="PRO_0000139562" description="Light-independent protochlorophyllide reductase iron-sulfur ATP-binding protein">
    <location>
        <begin position="1"/>
        <end position="295"/>
    </location>
</feature>
<feature type="region of interest" description="Disordered" evidence="2">
    <location>
        <begin position="275"/>
        <end position="295"/>
    </location>
</feature>
<feature type="compositionally biased region" description="Basic and acidic residues" evidence="2">
    <location>
        <begin position="275"/>
        <end position="289"/>
    </location>
</feature>
<feature type="binding site" evidence="1">
    <location>
        <begin position="10"/>
        <end position="15"/>
    </location>
    <ligand>
        <name>ATP</name>
        <dbReference type="ChEBI" id="CHEBI:30616"/>
    </ligand>
</feature>
<feature type="binding site" evidence="1">
    <location>
        <position position="14"/>
    </location>
    <ligand>
        <name>Mg(2+)</name>
        <dbReference type="ChEBI" id="CHEBI:18420"/>
    </ligand>
</feature>
<feature type="binding site" evidence="1">
    <location>
        <position position="39"/>
    </location>
    <ligand>
        <name>ATP</name>
        <dbReference type="ChEBI" id="CHEBI:30616"/>
    </ligand>
</feature>
<feature type="binding site" evidence="1">
    <location>
        <position position="95"/>
    </location>
    <ligand>
        <name>[4Fe-4S] cluster</name>
        <dbReference type="ChEBI" id="CHEBI:49883"/>
        <note>ligand shared between dimeric partners</note>
    </ligand>
</feature>
<feature type="binding site" evidence="1">
    <location>
        <position position="129"/>
    </location>
    <ligand>
        <name>[4Fe-4S] cluster</name>
        <dbReference type="ChEBI" id="CHEBI:49883"/>
        <note>ligand shared between dimeric partners</note>
    </ligand>
</feature>
<feature type="binding site" evidence="1">
    <location>
        <begin position="180"/>
        <end position="181"/>
    </location>
    <ligand>
        <name>ATP</name>
        <dbReference type="ChEBI" id="CHEBI:30616"/>
    </ligand>
</feature>
<accession>Q6YXQ7</accession>
<geneLocation type="chloroplast"/>
<evidence type="ECO:0000255" key="1">
    <source>
        <dbReference type="HAMAP-Rule" id="MF_00355"/>
    </source>
</evidence>
<evidence type="ECO:0000256" key="2">
    <source>
        <dbReference type="SAM" id="MobiDB-lite"/>
    </source>
</evidence>
<comment type="function">
    <text evidence="1">Component of the dark-operative protochlorophyllide reductase (DPOR) that uses Mg-ATP and reduced ferredoxin to reduce ring D of protochlorophyllide (Pchlide) to form chlorophyllide a (Chlide). This reaction is light-independent. The L component serves as a unique electron donor to the NB-component of the complex, and binds Mg-ATP.</text>
</comment>
<comment type="catalytic activity">
    <reaction evidence="1">
        <text>chlorophyllide a + oxidized 2[4Fe-4S]-[ferredoxin] + 2 ADP + 2 phosphate = protochlorophyllide a + reduced 2[4Fe-4S]-[ferredoxin] + 2 ATP + 2 H2O</text>
        <dbReference type="Rhea" id="RHEA:28202"/>
        <dbReference type="Rhea" id="RHEA-COMP:10002"/>
        <dbReference type="Rhea" id="RHEA-COMP:10004"/>
        <dbReference type="ChEBI" id="CHEBI:15377"/>
        <dbReference type="ChEBI" id="CHEBI:30616"/>
        <dbReference type="ChEBI" id="CHEBI:33722"/>
        <dbReference type="ChEBI" id="CHEBI:33723"/>
        <dbReference type="ChEBI" id="CHEBI:43474"/>
        <dbReference type="ChEBI" id="CHEBI:83348"/>
        <dbReference type="ChEBI" id="CHEBI:83350"/>
        <dbReference type="ChEBI" id="CHEBI:456216"/>
        <dbReference type="EC" id="1.3.7.7"/>
    </reaction>
</comment>
<comment type="cofactor">
    <cofactor evidence="1">
        <name>[4Fe-4S] cluster</name>
        <dbReference type="ChEBI" id="CHEBI:49883"/>
    </cofactor>
    <text evidence="1">Binds 1 [4Fe-4S] cluster per dimer.</text>
</comment>
<comment type="pathway">
    <text evidence="1">Porphyrin-containing compound metabolism; chlorophyll biosynthesis (light-independent).</text>
</comment>
<comment type="subunit">
    <text evidence="1">Homodimer. Protochlorophyllide reductase is composed of three subunits; ChlL, ChlN and ChlB.</text>
</comment>
<comment type="subcellular location">
    <subcellularLocation>
        <location>Plastid</location>
        <location>Chloroplast</location>
    </subcellularLocation>
</comment>
<comment type="similarity">
    <text evidence="1">Belongs to the NifH/BchL/ChlL family.</text>
</comment>
<gene>
    <name evidence="1" type="primary">chlL</name>
</gene>
<protein>
    <recommendedName>
        <fullName evidence="1">Light-independent protochlorophyllide reductase iron-sulfur ATP-binding protein</fullName>
        <shortName evidence="1">DPOR subunit L</shortName>
        <shortName evidence="1">LI-POR subunit L</shortName>
        <ecNumber evidence="1">1.3.7.7</ecNumber>
    </recommendedName>
</protein>
<name>CHLL_PHYPA</name>